<comment type="function">
    <text evidence="1">This protein is a component of the acetyl coenzyme A carboxylase complex; first, biotin carboxylase catalyzes the carboxylation of the carrier protein and then the transcarboxylase transfers the carboxyl group to form malonyl-CoA.</text>
</comment>
<comment type="pathway">
    <text>Lipid metabolism; fatty acid biosynthesis.</text>
</comment>
<comment type="subcellular location">
    <subcellularLocation>
        <location>Plastid</location>
        <location>Chloroplast</location>
    </subcellularLocation>
</comment>
<gene>
    <name type="primary">accB</name>
</gene>
<accession>O19918</accession>
<evidence type="ECO:0000250" key="1"/>
<evidence type="ECO:0000255" key="2">
    <source>
        <dbReference type="PROSITE-ProRule" id="PRU01066"/>
    </source>
</evidence>
<organism>
    <name type="scientific">Cyanidium caldarium</name>
    <name type="common">Red alga</name>
    <dbReference type="NCBI Taxonomy" id="2771"/>
    <lineage>
        <taxon>Eukaryota</taxon>
        <taxon>Rhodophyta</taxon>
        <taxon>Bangiophyceae</taxon>
        <taxon>Cyanidiales</taxon>
        <taxon>Cyanidiaceae</taxon>
        <taxon>Cyanidium</taxon>
    </lineage>
</organism>
<feature type="chain" id="PRO_0000146813" description="Biotin carboxyl carrier protein of acetyl-CoA carboxylase">
    <location>
        <begin position="1"/>
        <end position="152"/>
    </location>
</feature>
<feature type="domain" description="Biotinyl-binding" evidence="2">
    <location>
        <begin position="72"/>
        <end position="148"/>
    </location>
</feature>
<feature type="modified residue" description="N6-biotinyllysine" evidence="1 2">
    <location>
        <position position="114"/>
    </location>
</feature>
<proteinExistence type="inferred from homology"/>
<name>BCCP_CYACA</name>
<geneLocation type="chloroplast"/>
<dbReference type="EMBL" id="AF022186">
    <property type="protein sequence ID" value="AAB82671.1"/>
    <property type="molecule type" value="Genomic_DNA"/>
</dbReference>
<dbReference type="PIR" id="T11986">
    <property type="entry name" value="T11986"/>
</dbReference>
<dbReference type="RefSeq" id="NP_045090.1">
    <property type="nucleotide sequence ID" value="NC_001840.1"/>
</dbReference>
<dbReference type="SMR" id="O19918"/>
<dbReference type="GeneID" id="800299"/>
<dbReference type="UniPathway" id="UPA00094"/>
<dbReference type="GO" id="GO:0009317">
    <property type="term" value="C:acetyl-CoA carboxylase complex"/>
    <property type="evidence" value="ECO:0007669"/>
    <property type="project" value="InterPro"/>
</dbReference>
<dbReference type="GO" id="GO:0009507">
    <property type="term" value="C:chloroplast"/>
    <property type="evidence" value="ECO:0007669"/>
    <property type="project" value="UniProtKB-SubCell"/>
</dbReference>
<dbReference type="GO" id="GO:0003989">
    <property type="term" value="F:acetyl-CoA carboxylase activity"/>
    <property type="evidence" value="ECO:0007669"/>
    <property type="project" value="InterPro"/>
</dbReference>
<dbReference type="GO" id="GO:0006633">
    <property type="term" value="P:fatty acid biosynthetic process"/>
    <property type="evidence" value="ECO:0007669"/>
    <property type="project" value="UniProtKB-UniPathway"/>
</dbReference>
<dbReference type="CDD" id="cd06850">
    <property type="entry name" value="biotinyl_domain"/>
    <property type="match status" value="1"/>
</dbReference>
<dbReference type="Gene3D" id="2.40.50.100">
    <property type="match status" value="1"/>
</dbReference>
<dbReference type="InterPro" id="IPR001249">
    <property type="entry name" value="AcCoA_biotinCC"/>
</dbReference>
<dbReference type="InterPro" id="IPR001882">
    <property type="entry name" value="Biotin_BS"/>
</dbReference>
<dbReference type="InterPro" id="IPR050709">
    <property type="entry name" value="Biotin_Carboxyl_Carrier/Decarb"/>
</dbReference>
<dbReference type="InterPro" id="IPR000089">
    <property type="entry name" value="Biotin_lipoyl"/>
</dbReference>
<dbReference type="InterPro" id="IPR011053">
    <property type="entry name" value="Single_hybrid_motif"/>
</dbReference>
<dbReference type="PANTHER" id="PTHR45266">
    <property type="entry name" value="OXALOACETATE DECARBOXYLASE ALPHA CHAIN"/>
    <property type="match status" value="1"/>
</dbReference>
<dbReference type="PANTHER" id="PTHR45266:SF3">
    <property type="entry name" value="OXALOACETATE DECARBOXYLASE ALPHA CHAIN"/>
    <property type="match status" value="1"/>
</dbReference>
<dbReference type="Pfam" id="PF00364">
    <property type="entry name" value="Biotin_lipoyl"/>
    <property type="match status" value="1"/>
</dbReference>
<dbReference type="PRINTS" id="PR01071">
    <property type="entry name" value="ACOABIOTINCC"/>
</dbReference>
<dbReference type="SUPFAM" id="SSF51230">
    <property type="entry name" value="Single hybrid motif"/>
    <property type="match status" value="1"/>
</dbReference>
<dbReference type="PROSITE" id="PS00188">
    <property type="entry name" value="BIOTIN"/>
    <property type="match status" value="1"/>
</dbReference>
<dbReference type="PROSITE" id="PS50968">
    <property type="entry name" value="BIOTINYL_LIPOYL"/>
    <property type="match status" value="1"/>
</dbReference>
<reference key="1">
    <citation type="journal article" date="2000" name="J. Mol. Evol.">
        <title>The structure and gene repertoire of an ancient red algal plastid genome.</title>
        <authorList>
            <person name="Gloeckner G."/>
            <person name="Rosenthal A."/>
            <person name="Valentin K.-U."/>
        </authorList>
    </citation>
    <scope>NUCLEOTIDE SEQUENCE [LARGE SCALE GENOMIC DNA]</scope>
    <source>
        <strain>RK-1</strain>
    </source>
</reference>
<protein>
    <recommendedName>
        <fullName>Biotin carboxyl carrier protein of acetyl-CoA carboxylase</fullName>
        <shortName>BCCP</shortName>
    </recommendedName>
</protein>
<keyword id="KW-0092">Biotin</keyword>
<keyword id="KW-0150">Chloroplast</keyword>
<keyword id="KW-0275">Fatty acid biosynthesis</keyword>
<keyword id="KW-0276">Fatty acid metabolism</keyword>
<keyword id="KW-0444">Lipid biosynthesis</keyword>
<keyword id="KW-0443">Lipid metabolism</keyword>
<keyword id="KW-0934">Plastid</keyword>
<sequence>MLHSSIYWKNLINTFESGCFSIAEVKFIFSNIHIYKNICNPYKNYQLPELARNLQSSKKLDNAILKQDKKNIIDILSPISGIFYSSSKPGASPFVAVGSVVSKGQTLCIIEAMKTMNEIESDSIGKIHQICARNGDFVTKNQVLMKIILEQS</sequence>